<comment type="function">
    <text evidence="1">Catalyzes the reversible interconversion of serine and glycine with tetrahydrofolate (THF) serving as the one-carbon carrier. This reaction serves as the major source of one-carbon groups required for the biosynthesis of purines, thymidylate, methionine, and other important biomolecules. Also exhibits THF-independent aldolase activity toward beta-hydroxyamino acids, producing glycine and aldehydes, via a retro-aldol mechanism.</text>
</comment>
<comment type="catalytic activity">
    <reaction evidence="1">
        <text>(6R)-5,10-methylene-5,6,7,8-tetrahydrofolate + glycine + H2O = (6S)-5,6,7,8-tetrahydrofolate + L-serine</text>
        <dbReference type="Rhea" id="RHEA:15481"/>
        <dbReference type="ChEBI" id="CHEBI:15377"/>
        <dbReference type="ChEBI" id="CHEBI:15636"/>
        <dbReference type="ChEBI" id="CHEBI:33384"/>
        <dbReference type="ChEBI" id="CHEBI:57305"/>
        <dbReference type="ChEBI" id="CHEBI:57453"/>
        <dbReference type="EC" id="2.1.2.1"/>
    </reaction>
</comment>
<comment type="cofactor">
    <cofactor evidence="1">
        <name>pyridoxal 5'-phosphate</name>
        <dbReference type="ChEBI" id="CHEBI:597326"/>
    </cofactor>
</comment>
<comment type="pathway">
    <text evidence="1">One-carbon metabolism; tetrahydrofolate interconversion.</text>
</comment>
<comment type="pathway">
    <text evidence="1">Amino-acid biosynthesis; glycine biosynthesis; glycine from L-serine: step 1/1.</text>
</comment>
<comment type="subunit">
    <text evidence="1">Homodimer.</text>
</comment>
<comment type="subcellular location">
    <subcellularLocation>
        <location evidence="1">Cytoplasm</location>
    </subcellularLocation>
</comment>
<comment type="similarity">
    <text evidence="1">Belongs to the SHMT family.</text>
</comment>
<proteinExistence type="inferred from homology"/>
<accession>Q492D5</accession>
<feature type="chain" id="PRO_0000234951" description="Serine hydroxymethyltransferase">
    <location>
        <begin position="1"/>
        <end position="416"/>
    </location>
</feature>
<feature type="binding site" evidence="1">
    <location>
        <position position="117"/>
    </location>
    <ligand>
        <name>(6S)-5,6,7,8-tetrahydrofolate</name>
        <dbReference type="ChEBI" id="CHEBI:57453"/>
    </ligand>
</feature>
<feature type="binding site" evidence="1">
    <location>
        <begin position="121"/>
        <end position="123"/>
    </location>
    <ligand>
        <name>(6S)-5,6,7,8-tetrahydrofolate</name>
        <dbReference type="ChEBI" id="CHEBI:57453"/>
    </ligand>
</feature>
<feature type="binding site" evidence="1">
    <location>
        <begin position="351"/>
        <end position="353"/>
    </location>
    <ligand>
        <name>(6S)-5,6,7,8-tetrahydrofolate</name>
        <dbReference type="ChEBI" id="CHEBI:57453"/>
    </ligand>
</feature>
<feature type="site" description="Plays an important role in substrate specificity" evidence="1">
    <location>
        <position position="224"/>
    </location>
</feature>
<feature type="modified residue" description="N6-(pyridoxal phosphate)lysine" evidence="1">
    <location>
        <position position="225"/>
    </location>
</feature>
<name>GLYA_BLOPB</name>
<organism>
    <name type="scientific">Blochmanniella pennsylvanica (strain BPEN)</name>
    <dbReference type="NCBI Taxonomy" id="291272"/>
    <lineage>
        <taxon>Bacteria</taxon>
        <taxon>Pseudomonadati</taxon>
        <taxon>Pseudomonadota</taxon>
        <taxon>Gammaproteobacteria</taxon>
        <taxon>Enterobacterales</taxon>
        <taxon>Enterobacteriaceae</taxon>
        <taxon>ant endosymbionts</taxon>
        <taxon>Candidatus Blochmanniella</taxon>
    </lineage>
</organism>
<sequence>MSICTSYDIELWKIIQQETIRQEEHIELIASENYVSTQVMKAQGSQLTNKYAEGYPGKRYYGGCEYVDMIEQLGINRAKELFSADYANIQPHSGSQANFSVYNALLHPGDTILSMHLNHGGHLTHGSQVNFSGKLYNAVFYGVDENGCINYEKVHHLAVKHRPKMIVGGFSAYSGIINWSNLRQIADAVQAYLFIDMAHITGLVAAGIYPNPLPHAHVVTATTHKTLAGPRGGLILASGGNDALYKKLDASVFPGSQGGPLMHVIAAKAIALKEAMDPSFKVYQQKIVQNAKIMVKEFALREFKIISGMTHNHLFLLDLRDKNITGKDASTALERANIIVNKNSIPNDFRSPFITSGIRIGTPAITRRNFNENDVRKLSHWICDILNHIDNNEIIFSIKNKVLRICSQYPIYNKSY</sequence>
<evidence type="ECO:0000255" key="1">
    <source>
        <dbReference type="HAMAP-Rule" id="MF_00051"/>
    </source>
</evidence>
<reference key="1">
    <citation type="journal article" date="2005" name="Genome Res.">
        <title>Genome sequence of Blochmannia pennsylvanicus indicates parallel evolutionary trends among bacterial mutualists of insects.</title>
        <authorList>
            <person name="Degnan P.H."/>
            <person name="Lazarus A.B."/>
            <person name="Wernegreen J.J."/>
        </authorList>
    </citation>
    <scope>NUCLEOTIDE SEQUENCE [LARGE SCALE GENOMIC DNA]</scope>
    <source>
        <strain>BPEN</strain>
    </source>
</reference>
<keyword id="KW-0028">Amino-acid biosynthesis</keyword>
<keyword id="KW-0963">Cytoplasm</keyword>
<keyword id="KW-0554">One-carbon metabolism</keyword>
<keyword id="KW-0663">Pyridoxal phosphate</keyword>
<keyword id="KW-1185">Reference proteome</keyword>
<keyword id="KW-0808">Transferase</keyword>
<dbReference type="EC" id="2.1.2.1" evidence="1"/>
<dbReference type="EMBL" id="CP000016">
    <property type="protein sequence ID" value="AAZ41166.1"/>
    <property type="molecule type" value="Genomic_DNA"/>
</dbReference>
<dbReference type="RefSeq" id="WP_011283077.1">
    <property type="nucleotide sequence ID" value="NC_007292.1"/>
</dbReference>
<dbReference type="SMR" id="Q492D5"/>
<dbReference type="STRING" id="291272.BPEN_556"/>
<dbReference type="KEGG" id="bpn:BPEN_556"/>
<dbReference type="eggNOG" id="COG0112">
    <property type="taxonomic scope" value="Bacteria"/>
</dbReference>
<dbReference type="HOGENOM" id="CLU_022477_2_1_6"/>
<dbReference type="OrthoDB" id="9803846at2"/>
<dbReference type="UniPathway" id="UPA00193"/>
<dbReference type="UniPathway" id="UPA00288">
    <property type="reaction ID" value="UER01023"/>
</dbReference>
<dbReference type="Proteomes" id="UP000007794">
    <property type="component" value="Chromosome"/>
</dbReference>
<dbReference type="GO" id="GO:0005829">
    <property type="term" value="C:cytosol"/>
    <property type="evidence" value="ECO:0007669"/>
    <property type="project" value="TreeGrafter"/>
</dbReference>
<dbReference type="GO" id="GO:0004372">
    <property type="term" value="F:glycine hydroxymethyltransferase activity"/>
    <property type="evidence" value="ECO:0007669"/>
    <property type="project" value="UniProtKB-UniRule"/>
</dbReference>
<dbReference type="GO" id="GO:0030170">
    <property type="term" value="F:pyridoxal phosphate binding"/>
    <property type="evidence" value="ECO:0007669"/>
    <property type="project" value="UniProtKB-UniRule"/>
</dbReference>
<dbReference type="GO" id="GO:0019264">
    <property type="term" value="P:glycine biosynthetic process from serine"/>
    <property type="evidence" value="ECO:0007669"/>
    <property type="project" value="UniProtKB-UniRule"/>
</dbReference>
<dbReference type="GO" id="GO:0035999">
    <property type="term" value="P:tetrahydrofolate interconversion"/>
    <property type="evidence" value="ECO:0007669"/>
    <property type="project" value="UniProtKB-UniRule"/>
</dbReference>
<dbReference type="CDD" id="cd00378">
    <property type="entry name" value="SHMT"/>
    <property type="match status" value="1"/>
</dbReference>
<dbReference type="FunFam" id="3.40.640.10:FF:000001">
    <property type="entry name" value="Serine hydroxymethyltransferase"/>
    <property type="match status" value="1"/>
</dbReference>
<dbReference type="FunFam" id="3.90.1150.10:FF:000003">
    <property type="entry name" value="Serine hydroxymethyltransferase"/>
    <property type="match status" value="1"/>
</dbReference>
<dbReference type="Gene3D" id="3.90.1150.10">
    <property type="entry name" value="Aspartate Aminotransferase, domain 1"/>
    <property type="match status" value="1"/>
</dbReference>
<dbReference type="Gene3D" id="3.40.640.10">
    <property type="entry name" value="Type I PLP-dependent aspartate aminotransferase-like (Major domain)"/>
    <property type="match status" value="1"/>
</dbReference>
<dbReference type="HAMAP" id="MF_00051">
    <property type="entry name" value="SHMT"/>
    <property type="match status" value="1"/>
</dbReference>
<dbReference type="InterPro" id="IPR015424">
    <property type="entry name" value="PyrdxlP-dep_Trfase"/>
</dbReference>
<dbReference type="InterPro" id="IPR015421">
    <property type="entry name" value="PyrdxlP-dep_Trfase_major"/>
</dbReference>
<dbReference type="InterPro" id="IPR015422">
    <property type="entry name" value="PyrdxlP-dep_Trfase_small"/>
</dbReference>
<dbReference type="InterPro" id="IPR001085">
    <property type="entry name" value="Ser_HO-MeTrfase"/>
</dbReference>
<dbReference type="InterPro" id="IPR049943">
    <property type="entry name" value="Ser_HO-MeTrfase-like"/>
</dbReference>
<dbReference type="InterPro" id="IPR019798">
    <property type="entry name" value="Ser_HO-MeTrfase_PLP_BS"/>
</dbReference>
<dbReference type="InterPro" id="IPR039429">
    <property type="entry name" value="SHMT-like_dom"/>
</dbReference>
<dbReference type="NCBIfam" id="NF000586">
    <property type="entry name" value="PRK00011.1"/>
    <property type="match status" value="1"/>
</dbReference>
<dbReference type="PANTHER" id="PTHR11680">
    <property type="entry name" value="SERINE HYDROXYMETHYLTRANSFERASE"/>
    <property type="match status" value="1"/>
</dbReference>
<dbReference type="PANTHER" id="PTHR11680:SF50">
    <property type="entry name" value="SERINE HYDROXYMETHYLTRANSFERASE"/>
    <property type="match status" value="1"/>
</dbReference>
<dbReference type="Pfam" id="PF00464">
    <property type="entry name" value="SHMT"/>
    <property type="match status" value="1"/>
</dbReference>
<dbReference type="PIRSF" id="PIRSF000412">
    <property type="entry name" value="SHMT"/>
    <property type="match status" value="1"/>
</dbReference>
<dbReference type="SUPFAM" id="SSF53383">
    <property type="entry name" value="PLP-dependent transferases"/>
    <property type="match status" value="1"/>
</dbReference>
<dbReference type="PROSITE" id="PS00096">
    <property type="entry name" value="SHMT"/>
    <property type="match status" value="1"/>
</dbReference>
<protein>
    <recommendedName>
        <fullName evidence="1">Serine hydroxymethyltransferase</fullName>
        <shortName evidence="1">SHMT</shortName>
        <shortName evidence="1">Serine methylase</shortName>
        <ecNumber evidence="1">2.1.2.1</ecNumber>
    </recommendedName>
</protein>
<gene>
    <name evidence="1" type="primary">glyA</name>
    <name type="ordered locus">BPEN_556</name>
</gene>